<evidence type="ECO:0000255" key="1">
    <source>
        <dbReference type="HAMAP-Rule" id="MF_01279"/>
    </source>
</evidence>
<proteinExistence type="inferred from homology"/>
<protein>
    <recommendedName>
        <fullName evidence="1">Xaa-Pro dipeptidase</fullName>
        <shortName evidence="1">X-Pro dipeptidase</shortName>
        <ecNumber evidence="1">3.4.13.9</ecNumber>
    </recommendedName>
    <alternativeName>
        <fullName evidence="1">Imidodipeptidase</fullName>
    </alternativeName>
    <alternativeName>
        <fullName evidence="1">Proline dipeptidase</fullName>
        <shortName evidence="1">Prolidase</shortName>
    </alternativeName>
</protein>
<name>PEPQ_SHESW</name>
<sequence length="440" mass="49997">MDQLAHHYRAHIAELNRRVAEILSREALSGLVIHSGQPHRMFLDDINYPFKANPHFKAWLPVLDNPNCWLVVNGRDKPQLIFYRPVDFWHKVSDVPDMFWTEHFDIKLLTKADKVAELLPKDTVNWAYLGEHLDVAEVLGFTSRNPDAVMSYLHYHRTTKTEYELECMRRANQIAVQGHLAAKNAFYNGASEFEIQQHYLSAVGQSENEVPYGNIIALNQNAAILHYTALEHQSPAKRLSFLIDAGASYFGYASDITRTYAFEKNRFDELIAAMNKAQLELIDMMRPGVRYPDLHLATHAKVAQMLLDFDLATGDAQGLVDQGITSAFFPHGLGHMLGLQVHDVGGFSHDERGTHIAAPEAHPFLRCTRILAPNQVLTMEPGLYIIDTLLNELKQDSRGLQINWQTVDELRPFGGIRIEDNVIVHQDRNENMTRELGLAD</sequence>
<comment type="function">
    <text evidence="1">Splits dipeptides with a prolyl residue in the C-terminal position.</text>
</comment>
<comment type="catalytic activity">
    <reaction evidence="1">
        <text>Xaa-L-Pro dipeptide + H2O = an L-alpha-amino acid + L-proline</text>
        <dbReference type="Rhea" id="RHEA:76407"/>
        <dbReference type="ChEBI" id="CHEBI:15377"/>
        <dbReference type="ChEBI" id="CHEBI:59869"/>
        <dbReference type="ChEBI" id="CHEBI:60039"/>
        <dbReference type="ChEBI" id="CHEBI:195196"/>
        <dbReference type="EC" id="3.4.13.9"/>
    </reaction>
</comment>
<comment type="cofactor">
    <cofactor evidence="1">
        <name>Mn(2+)</name>
        <dbReference type="ChEBI" id="CHEBI:29035"/>
    </cofactor>
    <text evidence="1">Binds 2 manganese ions per subunit.</text>
</comment>
<comment type="similarity">
    <text evidence="1">Belongs to the peptidase M24B family. Bacterial-type prolidase subfamily.</text>
</comment>
<accession>A1RDW7</accession>
<reference key="1">
    <citation type="submission" date="2006-12" db="EMBL/GenBank/DDBJ databases">
        <title>Complete sequence of Shewanella sp. W3-18-1.</title>
        <authorList>
            <consortium name="US DOE Joint Genome Institute"/>
            <person name="Copeland A."/>
            <person name="Lucas S."/>
            <person name="Lapidus A."/>
            <person name="Barry K."/>
            <person name="Detter J.C."/>
            <person name="Glavina del Rio T."/>
            <person name="Hammon N."/>
            <person name="Israni S."/>
            <person name="Dalin E."/>
            <person name="Tice H."/>
            <person name="Pitluck S."/>
            <person name="Chain P."/>
            <person name="Malfatti S."/>
            <person name="Shin M."/>
            <person name="Vergez L."/>
            <person name="Schmutz J."/>
            <person name="Larimer F."/>
            <person name="Land M."/>
            <person name="Hauser L."/>
            <person name="Kyrpides N."/>
            <person name="Lykidis A."/>
            <person name="Tiedje J."/>
            <person name="Richardson P."/>
        </authorList>
    </citation>
    <scope>NUCLEOTIDE SEQUENCE [LARGE SCALE GENOMIC DNA]</scope>
    <source>
        <strain>W3-18-1</strain>
    </source>
</reference>
<gene>
    <name evidence="1" type="primary">pepQ</name>
    <name type="ordered locus">Sputw3181_0014</name>
</gene>
<keyword id="KW-0224">Dipeptidase</keyword>
<keyword id="KW-0378">Hydrolase</keyword>
<keyword id="KW-0464">Manganese</keyword>
<keyword id="KW-0479">Metal-binding</keyword>
<keyword id="KW-0482">Metalloprotease</keyword>
<keyword id="KW-0645">Protease</keyword>
<organism>
    <name type="scientific">Shewanella sp. (strain W3-18-1)</name>
    <dbReference type="NCBI Taxonomy" id="351745"/>
    <lineage>
        <taxon>Bacteria</taxon>
        <taxon>Pseudomonadati</taxon>
        <taxon>Pseudomonadota</taxon>
        <taxon>Gammaproteobacteria</taxon>
        <taxon>Alteromonadales</taxon>
        <taxon>Shewanellaceae</taxon>
        <taxon>Shewanella</taxon>
    </lineage>
</organism>
<dbReference type="EC" id="3.4.13.9" evidence="1"/>
<dbReference type="EMBL" id="CP000503">
    <property type="protein sequence ID" value="ABM22867.1"/>
    <property type="molecule type" value="Genomic_DNA"/>
</dbReference>
<dbReference type="RefSeq" id="WP_011787436.1">
    <property type="nucleotide sequence ID" value="NC_008750.1"/>
</dbReference>
<dbReference type="SMR" id="A1RDW7"/>
<dbReference type="MEROPS" id="M24.003"/>
<dbReference type="KEGG" id="shw:Sputw3181_0014"/>
<dbReference type="HOGENOM" id="CLU_050675_0_0_6"/>
<dbReference type="Proteomes" id="UP000002597">
    <property type="component" value="Chromosome"/>
</dbReference>
<dbReference type="GO" id="GO:0005829">
    <property type="term" value="C:cytosol"/>
    <property type="evidence" value="ECO:0007669"/>
    <property type="project" value="TreeGrafter"/>
</dbReference>
<dbReference type="GO" id="GO:0004177">
    <property type="term" value="F:aminopeptidase activity"/>
    <property type="evidence" value="ECO:0007669"/>
    <property type="project" value="TreeGrafter"/>
</dbReference>
<dbReference type="GO" id="GO:0046872">
    <property type="term" value="F:metal ion binding"/>
    <property type="evidence" value="ECO:0007669"/>
    <property type="project" value="UniProtKB-KW"/>
</dbReference>
<dbReference type="GO" id="GO:0008235">
    <property type="term" value="F:metalloexopeptidase activity"/>
    <property type="evidence" value="ECO:0007669"/>
    <property type="project" value="UniProtKB-UniRule"/>
</dbReference>
<dbReference type="GO" id="GO:0016795">
    <property type="term" value="F:phosphoric triester hydrolase activity"/>
    <property type="evidence" value="ECO:0007669"/>
    <property type="project" value="InterPro"/>
</dbReference>
<dbReference type="GO" id="GO:0102009">
    <property type="term" value="F:proline dipeptidase activity"/>
    <property type="evidence" value="ECO:0007669"/>
    <property type="project" value="UniProtKB-EC"/>
</dbReference>
<dbReference type="GO" id="GO:0006508">
    <property type="term" value="P:proteolysis"/>
    <property type="evidence" value="ECO:0007669"/>
    <property type="project" value="UniProtKB-KW"/>
</dbReference>
<dbReference type="CDD" id="cd01087">
    <property type="entry name" value="Prolidase"/>
    <property type="match status" value="1"/>
</dbReference>
<dbReference type="Gene3D" id="3.90.230.10">
    <property type="entry name" value="Creatinase/methionine aminopeptidase superfamily"/>
    <property type="match status" value="1"/>
</dbReference>
<dbReference type="Gene3D" id="3.40.350.10">
    <property type="entry name" value="Creatinase/prolidase N-terminal domain"/>
    <property type="match status" value="1"/>
</dbReference>
<dbReference type="HAMAP" id="MF_01279">
    <property type="entry name" value="X_Pro_dipeptid"/>
    <property type="match status" value="1"/>
</dbReference>
<dbReference type="InterPro" id="IPR029149">
    <property type="entry name" value="Creatin/AminoP/Spt16_N"/>
</dbReference>
<dbReference type="InterPro" id="IPR036005">
    <property type="entry name" value="Creatinase/aminopeptidase-like"/>
</dbReference>
<dbReference type="InterPro" id="IPR048819">
    <property type="entry name" value="PepQ_N"/>
</dbReference>
<dbReference type="InterPro" id="IPR000994">
    <property type="entry name" value="Pept_M24"/>
</dbReference>
<dbReference type="InterPro" id="IPR001131">
    <property type="entry name" value="Peptidase_M24B_aminopep-P_CS"/>
</dbReference>
<dbReference type="InterPro" id="IPR052433">
    <property type="entry name" value="X-Pro_dipept-like"/>
</dbReference>
<dbReference type="InterPro" id="IPR022846">
    <property type="entry name" value="X_Pro_dipept"/>
</dbReference>
<dbReference type="NCBIfam" id="NF010133">
    <property type="entry name" value="PRK13607.1"/>
    <property type="match status" value="1"/>
</dbReference>
<dbReference type="PANTHER" id="PTHR43226">
    <property type="entry name" value="XAA-PRO AMINOPEPTIDASE 3"/>
    <property type="match status" value="1"/>
</dbReference>
<dbReference type="PANTHER" id="PTHR43226:SF8">
    <property type="entry name" value="XAA-PRO DIPEPTIDASE"/>
    <property type="match status" value="1"/>
</dbReference>
<dbReference type="Pfam" id="PF21216">
    <property type="entry name" value="PepQ_N"/>
    <property type="match status" value="1"/>
</dbReference>
<dbReference type="Pfam" id="PF00557">
    <property type="entry name" value="Peptidase_M24"/>
    <property type="match status" value="1"/>
</dbReference>
<dbReference type="SUPFAM" id="SSF55920">
    <property type="entry name" value="Creatinase/aminopeptidase"/>
    <property type="match status" value="1"/>
</dbReference>
<dbReference type="SUPFAM" id="SSF53092">
    <property type="entry name" value="Creatinase/prolidase N-terminal domain"/>
    <property type="match status" value="1"/>
</dbReference>
<dbReference type="PROSITE" id="PS00491">
    <property type="entry name" value="PROLINE_PEPTIDASE"/>
    <property type="match status" value="1"/>
</dbReference>
<feature type="chain" id="PRO_0000303865" description="Xaa-Pro dipeptidase">
    <location>
        <begin position="1"/>
        <end position="440"/>
    </location>
</feature>
<feature type="binding site" evidence="1">
    <location>
        <position position="244"/>
    </location>
    <ligand>
        <name>Mn(2+)</name>
        <dbReference type="ChEBI" id="CHEBI:29035"/>
        <label>2</label>
    </ligand>
</feature>
<feature type="binding site" evidence="1">
    <location>
        <position position="255"/>
    </location>
    <ligand>
        <name>Mn(2+)</name>
        <dbReference type="ChEBI" id="CHEBI:29035"/>
        <label>1</label>
    </ligand>
</feature>
<feature type="binding site" evidence="1">
    <location>
        <position position="255"/>
    </location>
    <ligand>
        <name>Mn(2+)</name>
        <dbReference type="ChEBI" id="CHEBI:29035"/>
        <label>2</label>
    </ligand>
</feature>
<feature type="binding site" evidence="1">
    <location>
        <position position="335"/>
    </location>
    <ligand>
        <name>Mn(2+)</name>
        <dbReference type="ChEBI" id="CHEBI:29035"/>
        <label>1</label>
    </ligand>
</feature>
<feature type="binding site" evidence="1">
    <location>
        <position position="380"/>
    </location>
    <ligand>
        <name>Mn(2+)</name>
        <dbReference type="ChEBI" id="CHEBI:29035"/>
        <label>1</label>
    </ligand>
</feature>
<feature type="binding site" evidence="1">
    <location>
        <position position="419"/>
    </location>
    <ligand>
        <name>Mn(2+)</name>
        <dbReference type="ChEBI" id="CHEBI:29035"/>
        <label>1</label>
    </ligand>
</feature>
<feature type="binding site" evidence="1">
    <location>
        <position position="419"/>
    </location>
    <ligand>
        <name>Mn(2+)</name>
        <dbReference type="ChEBI" id="CHEBI:29035"/>
        <label>2</label>
    </ligand>
</feature>